<keyword id="KW-0067">ATP-binding</keyword>
<keyword id="KW-0460">Magnesium</keyword>
<keyword id="KW-0547">Nucleotide-binding</keyword>
<keyword id="KW-0808">Transferase</keyword>
<keyword id="KW-0819">tRNA processing</keyword>
<gene>
    <name evidence="1" type="primary">miaA</name>
    <name type="ordered locus">Rpal_2241</name>
</gene>
<feature type="chain" id="PRO_0000377292" description="tRNA dimethylallyltransferase">
    <location>
        <begin position="1"/>
        <end position="301"/>
    </location>
</feature>
<feature type="region of interest" description="Interaction with substrate tRNA" evidence="1">
    <location>
        <begin position="30"/>
        <end position="33"/>
    </location>
</feature>
<feature type="binding site" evidence="1">
    <location>
        <begin position="5"/>
        <end position="12"/>
    </location>
    <ligand>
        <name>ATP</name>
        <dbReference type="ChEBI" id="CHEBI:30616"/>
    </ligand>
</feature>
<feature type="binding site" evidence="1">
    <location>
        <begin position="7"/>
        <end position="12"/>
    </location>
    <ligand>
        <name>substrate</name>
    </ligand>
</feature>
<feature type="site" description="Interaction with substrate tRNA" evidence="1">
    <location>
        <position position="96"/>
    </location>
</feature>
<feature type="site" description="Interaction with substrate tRNA" evidence="1">
    <location>
        <position position="118"/>
    </location>
</feature>
<dbReference type="EC" id="2.5.1.75" evidence="1"/>
<dbReference type="EMBL" id="CP001096">
    <property type="protein sequence ID" value="ACF00762.1"/>
    <property type="molecule type" value="Genomic_DNA"/>
</dbReference>
<dbReference type="SMR" id="B3QCV7"/>
<dbReference type="KEGG" id="rpt:Rpal_2241"/>
<dbReference type="HOGENOM" id="CLU_032616_0_1_5"/>
<dbReference type="Proteomes" id="UP000001725">
    <property type="component" value="Chromosome"/>
</dbReference>
<dbReference type="GO" id="GO:0005524">
    <property type="term" value="F:ATP binding"/>
    <property type="evidence" value="ECO:0007669"/>
    <property type="project" value="UniProtKB-UniRule"/>
</dbReference>
<dbReference type="GO" id="GO:0052381">
    <property type="term" value="F:tRNA dimethylallyltransferase activity"/>
    <property type="evidence" value="ECO:0007669"/>
    <property type="project" value="UniProtKB-UniRule"/>
</dbReference>
<dbReference type="GO" id="GO:0006400">
    <property type="term" value="P:tRNA modification"/>
    <property type="evidence" value="ECO:0007669"/>
    <property type="project" value="TreeGrafter"/>
</dbReference>
<dbReference type="FunFam" id="1.10.20.140:FF:000001">
    <property type="entry name" value="tRNA dimethylallyltransferase"/>
    <property type="match status" value="1"/>
</dbReference>
<dbReference type="Gene3D" id="1.10.20.140">
    <property type="match status" value="1"/>
</dbReference>
<dbReference type="Gene3D" id="3.40.50.300">
    <property type="entry name" value="P-loop containing nucleotide triphosphate hydrolases"/>
    <property type="match status" value="1"/>
</dbReference>
<dbReference type="HAMAP" id="MF_00185">
    <property type="entry name" value="IPP_trans"/>
    <property type="match status" value="1"/>
</dbReference>
<dbReference type="InterPro" id="IPR039657">
    <property type="entry name" value="Dimethylallyltransferase"/>
</dbReference>
<dbReference type="InterPro" id="IPR018022">
    <property type="entry name" value="IPT"/>
</dbReference>
<dbReference type="InterPro" id="IPR027417">
    <property type="entry name" value="P-loop_NTPase"/>
</dbReference>
<dbReference type="NCBIfam" id="TIGR00174">
    <property type="entry name" value="miaA"/>
    <property type="match status" value="1"/>
</dbReference>
<dbReference type="PANTHER" id="PTHR11088">
    <property type="entry name" value="TRNA DIMETHYLALLYLTRANSFERASE"/>
    <property type="match status" value="1"/>
</dbReference>
<dbReference type="PANTHER" id="PTHR11088:SF60">
    <property type="entry name" value="TRNA DIMETHYLALLYLTRANSFERASE"/>
    <property type="match status" value="1"/>
</dbReference>
<dbReference type="Pfam" id="PF01715">
    <property type="entry name" value="IPPT"/>
    <property type="match status" value="1"/>
</dbReference>
<dbReference type="SUPFAM" id="SSF52540">
    <property type="entry name" value="P-loop containing nucleoside triphosphate hydrolases"/>
    <property type="match status" value="2"/>
</dbReference>
<protein>
    <recommendedName>
        <fullName evidence="1">tRNA dimethylallyltransferase</fullName>
        <ecNumber evidence="1">2.5.1.75</ecNumber>
    </recommendedName>
    <alternativeName>
        <fullName evidence="1">Dimethylallyl diphosphate:tRNA dimethylallyltransferase</fullName>
        <shortName evidence="1">DMAPP:tRNA dimethylallyltransferase</shortName>
        <shortName evidence="1">DMATase</shortName>
    </alternativeName>
    <alternativeName>
        <fullName evidence="1">Isopentenyl-diphosphate:tRNA isopentenyltransferase</fullName>
        <shortName evidence="1">IPP transferase</shortName>
        <shortName evidence="1">IPPT</shortName>
        <shortName evidence="1">IPTase</shortName>
    </alternativeName>
</protein>
<organism>
    <name type="scientific">Rhodopseudomonas palustris (strain TIE-1)</name>
    <dbReference type="NCBI Taxonomy" id="395960"/>
    <lineage>
        <taxon>Bacteria</taxon>
        <taxon>Pseudomonadati</taxon>
        <taxon>Pseudomonadota</taxon>
        <taxon>Alphaproteobacteria</taxon>
        <taxon>Hyphomicrobiales</taxon>
        <taxon>Nitrobacteraceae</taxon>
        <taxon>Rhodopseudomonas</taxon>
    </lineage>
</organism>
<comment type="function">
    <text evidence="1">Catalyzes the transfer of a dimethylallyl group onto the adenine at position 37 in tRNAs that read codons beginning with uridine, leading to the formation of N6-(dimethylallyl)adenosine (i(6)A).</text>
</comment>
<comment type="catalytic activity">
    <reaction evidence="1">
        <text>adenosine(37) in tRNA + dimethylallyl diphosphate = N(6)-dimethylallyladenosine(37) in tRNA + diphosphate</text>
        <dbReference type="Rhea" id="RHEA:26482"/>
        <dbReference type="Rhea" id="RHEA-COMP:10162"/>
        <dbReference type="Rhea" id="RHEA-COMP:10375"/>
        <dbReference type="ChEBI" id="CHEBI:33019"/>
        <dbReference type="ChEBI" id="CHEBI:57623"/>
        <dbReference type="ChEBI" id="CHEBI:74411"/>
        <dbReference type="ChEBI" id="CHEBI:74415"/>
        <dbReference type="EC" id="2.5.1.75"/>
    </reaction>
</comment>
<comment type="cofactor">
    <cofactor evidence="1">
        <name>Mg(2+)</name>
        <dbReference type="ChEBI" id="CHEBI:18420"/>
    </cofactor>
</comment>
<comment type="subunit">
    <text evidence="1">Monomer.</text>
</comment>
<comment type="similarity">
    <text evidence="1">Belongs to the IPP transferase family.</text>
</comment>
<reference key="1">
    <citation type="submission" date="2008-05" db="EMBL/GenBank/DDBJ databases">
        <title>Complete sequence of Rhodopseudomonas palustris TIE-1.</title>
        <authorList>
            <consortium name="US DOE Joint Genome Institute"/>
            <person name="Lucas S."/>
            <person name="Copeland A."/>
            <person name="Lapidus A."/>
            <person name="Glavina del Rio T."/>
            <person name="Dalin E."/>
            <person name="Tice H."/>
            <person name="Pitluck S."/>
            <person name="Chain P."/>
            <person name="Malfatti S."/>
            <person name="Shin M."/>
            <person name="Vergez L."/>
            <person name="Lang D."/>
            <person name="Schmutz J."/>
            <person name="Larimer F."/>
            <person name="Land M."/>
            <person name="Hauser L."/>
            <person name="Kyrpides N."/>
            <person name="Mikhailova N."/>
            <person name="Emerson D."/>
            <person name="Newman D.K."/>
            <person name="Roden E."/>
            <person name="Richardson P."/>
        </authorList>
    </citation>
    <scope>NUCLEOTIDE SEQUENCE [LARGE SCALE GENOMIC DNA]</scope>
    <source>
        <strain>TIE-1</strain>
    </source>
</reference>
<evidence type="ECO:0000255" key="1">
    <source>
        <dbReference type="HAMAP-Rule" id="MF_00185"/>
    </source>
</evidence>
<name>MIAA_RHOPT</name>
<accession>B3QCV7</accession>
<proteinExistence type="inferred from homology"/>
<sequence>MLIAGPTASGKSALALKLAQASGGTVINTDSMQVYRDLRIITARPTPDEEALAPHRLYGTVDAAVNFSAGAYVEAAAVALAEVRVAGRLPILIGGTGLYFKALTRGLSAVPPVPAEVRDAVRLRLDRDGVQALHAELAGHDPEAAARLAPADRTRIARALEVVLATGRPLADWHQQTSPPLLPPDDVVAVFLAPDREALYARIDSRFAAMLQGGALNEVAALAERQLDPLLPAMKAHGVPALIRHLRGEITLEEAASIGAADTRHYAKRQFTWFRHQLPEFKWVRPQEADAFLNTVMPGRA</sequence>